<evidence type="ECO:0000255" key="1">
    <source>
        <dbReference type="HAMAP-Rule" id="MF_00004"/>
    </source>
</evidence>
<accession>P68779</accession>
<accession>O32418</accession>
<keyword id="KW-0963">Cytoplasm</keyword>
<keyword id="KW-0328">Glycosyltransferase</keyword>
<keyword id="KW-0660">Purine salvage</keyword>
<keyword id="KW-0808">Transferase</keyword>
<reference key="1">
    <citation type="journal article" date="2001" name="Lancet">
        <title>Whole genome sequencing of meticillin-resistant Staphylococcus aureus.</title>
        <authorList>
            <person name="Kuroda M."/>
            <person name="Ohta T."/>
            <person name="Uchiyama I."/>
            <person name="Baba T."/>
            <person name="Yuzawa H."/>
            <person name="Kobayashi I."/>
            <person name="Cui L."/>
            <person name="Oguchi A."/>
            <person name="Aoki K."/>
            <person name="Nagai Y."/>
            <person name="Lian J.-Q."/>
            <person name="Ito T."/>
            <person name="Kanamori M."/>
            <person name="Matsumaru H."/>
            <person name="Maruyama A."/>
            <person name="Murakami H."/>
            <person name="Hosoyama A."/>
            <person name="Mizutani-Ui Y."/>
            <person name="Takahashi N.K."/>
            <person name="Sawano T."/>
            <person name="Inoue R."/>
            <person name="Kaito C."/>
            <person name="Sekimizu K."/>
            <person name="Hirakawa H."/>
            <person name="Kuhara S."/>
            <person name="Goto S."/>
            <person name="Yabuzaki J."/>
            <person name="Kanehisa M."/>
            <person name="Yamashita A."/>
            <person name="Oshima K."/>
            <person name="Furuya K."/>
            <person name="Yoshino C."/>
            <person name="Shiba T."/>
            <person name="Hattori M."/>
            <person name="Ogasawara N."/>
            <person name="Hayashi H."/>
            <person name="Hiramatsu K."/>
        </authorList>
    </citation>
    <scope>NUCLEOTIDE SEQUENCE [LARGE SCALE GENOMIC DNA]</scope>
    <source>
        <strain>N315</strain>
    </source>
</reference>
<reference key="2">
    <citation type="submission" date="2007-10" db="UniProtKB">
        <title>Shotgun proteomic analysis of total and membrane protein extracts of S. aureus strain N315.</title>
        <authorList>
            <person name="Vaezzadeh A.R."/>
            <person name="Deshusses J."/>
            <person name="Lescuyer P."/>
            <person name="Hochstrasser D.F."/>
        </authorList>
    </citation>
    <scope>IDENTIFICATION BY MASS SPECTROMETRY [LARGE SCALE ANALYSIS]</scope>
    <source>
        <strain>N315</strain>
    </source>
</reference>
<protein>
    <recommendedName>
        <fullName evidence="1">Adenine phosphoribosyltransferase</fullName>
        <shortName evidence="1">APRT</shortName>
        <ecNumber evidence="1">2.4.2.7</ecNumber>
    </recommendedName>
</protein>
<gene>
    <name evidence="1" type="primary">apt</name>
    <name type="ordered locus">SA1461</name>
</gene>
<feature type="chain" id="PRO_0000149451" description="Adenine phosphoribosyltransferase">
    <location>
        <begin position="1"/>
        <end position="172"/>
    </location>
</feature>
<sequence length="172" mass="19117">MDLKQYVSEVQDWPKPGVSFKDITTIMDNGEAYGYATDKIVEYAKDRDVDIVVGPEARGFIIGCPVAYSMGIGFAPVRKEGKLPREVIRYEYDLEYGTNVLTMHKDAIKPGQRVLITDDLLATGGTIEAAIKLVEKLGGIVVGIAFIIELKYLNGIEKIKDYDVMSLISYDE</sequence>
<proteinExistence type="evidence at protein level"/>
<dbReference type="EC" id="2.4.2.7" evidence="1"/>
<dbReference type="EMBL" id="BA000018">
    <property type="protein sequence ID" value="BAB42727.1"/>
    <property type="molecule type" value="Genomic_DNA"/>
</dbReference>
<dbReference type="PIR" id="B89946">
    <property type="entry name" value="B89946"/>
</dbReference>
<dbReference type="RefSeq" id="WP_000364542.1">
    <property type="nucleotide sequence ID" value="NC_002745.2"/>
</dbReference>
<dbReference type="SMR" id="P68779"/>
<dbReference type="EnsemblBacteria" id="BAB42727">
    <property type="protein sequence ID" value="BAB42727"/>
    <property type="gene ID" value="BAB42727"/>
</dbReference>
<dbReference type="KEGG" id="sau:SA1461"/>
<dbReference type="HOGENOM" id="CLU_063339_3_0_9"/>
<dbReference type="UniPathway" id="UPA00588">
    <property type="reaction ID" value="UER00646"/>
</dbReference>
<dbReference type="GO" id="GO:0005737">
    <property type="term" value="C:cytoplasm"/>
    <property type="evidence" value="ECO:0007669"/>
    <property type="project" value="UniProtKB-SubCell"/>
</dbReference>
<dbReference type="GO" id="GO:0002055">
    <property type="term" value="F:adenine binding"/>
    <property type="evidence" value="ECO:0007669"/>
    <property type="project" value="TreeGrafter"/>
</dbReference>
<dbReference type="GO" id="GO:0003999">
    <property type="term" value="F:adenine phosphoribosyltransferase activity"/>
    <property type="evidence" value="ECO:0007669"/>
    <property type="project" value="UniProtKB-UniRule"/>
</dbReference>
<dbReference type="GO" id="GO:0016208">
    <property type="term" value="F:AMP binding"/>
    <property type="evidence" value="ECO:0007669"/>
    <property type="project" value="TreeGrafter"/>
</dbReference>
<dbReference type="GO" id="GO:0006168">
    <property type="term" value="P:adenine salvage"/>
    <property type="evidence" value="ECO:0007669"/>
    <property type="project" value="InterPro"/>
</dbReference>
<dbReference type="GO" id="GO:0044209">
    <property type="term" value="P:AMP salvage"/>
    <property type="evidence" value="ECO:0007669"/>
    <property type="project" value="UniProtKB-UniRule"/>
</dbReference>
<dbReference type="GO" id="GO:0006166">
    <property type="term" value="P:purine ribonucleoside salvage"/>
    <property type="evidence" value="ECO:0007669"/>
    <property type="project" value="UniProtKB-KW"/>
</dbReference>
<dbReference type="CDD" id="cd06223">
    <property type="entry name" value="PRTases_typeI"/>
    <property type="match status" value="1"/>
</dbReference>
<dbReference type="FunFam" id="3.40.50.2020:FF:000004">
    <property type="entry name" value="Adenine phosphoribosyltransferase"/>
    <property type="match status" value="1"/>
</dbReference>
<dbReference type="Gene3D" id="3.40.50.2020">
    <property type="match status" value="1"/>
</dbReference>
<dbReference type="HAMAP" id="MF_00004">
    <property type="entry name" value="Aden_phosphoribosyltr"/>
    <property type="match status" value="1"/>
</dbReference>
<dbReference type="InterPro" id="IPR005764">
    <property type="entry name" value="Ade_phspho_trans"/>
</dbReference>
<dbReference type="InterPro" id="IPR000836">
    <property type="entry name" value="PRibTrfase_dom"/>
</dbReference>
<dbReference type="InterPro" id="IPR029057">
    <property type="entry name" value="PRTase-like"/>
</dbReference>
<dbReference type="InterPro" id="IPR050054">
    <property type="entry name" value="UPRTase/APRTase"/>
</dbReference>
<dbReference type="NCBIfam" id="TIGR01090">
    <property type="entry name" value="apt"/>
    <property type="match status" value="1"/>
</dbReference>
<dbReference type="NCBIfam" id="NF002633">
    <property type="entry name" value="PRK02304.1-2"/>
    <property type="match status" value="1"/>
</dbReference>
<dbReference type="NCBIfam" id="NF002634">
    <property type="entry name" value="PRK02304.1-3"/>
    <property type="match status" value="1"/>
</dbReference>
<dbReference type="NCBIfam" id="NF002636">
    <property type="entry name" value="PRK02304.1-5"/>
    <property type="match status" value="1"/>
</dbReference>
<dbReference type="PANTHER" id="PTHR32315">
    <property type="entry name" value="ADENINE PHOSPHORIBOSYLTRANSFERASE"/>
    <property type="match status" value="1"/>
</dbReference>
<dbReference type="PANTHER" id="PTHR32315:SF3">
    <property type="entry name" value="ADENINE PHOSPHORIBOSYLTRANSFERASE"/>
    <property type="match status" value="1"/>
</dbReference>
<dbReference type="Pfam" id="PF00156">
    <property type="entry name" value="Pribosyltran"/>
    <property type="match status" value="1"/>
</dbReference>
<dbReference type="SUPFAM" id="SSF53271">
    <property type="entry name" value="PRTase-like"/>
    <property type="match status" value="1"/>
</dbReference>
<name>APT_STAAN</name>
<comment type="function">
    <text evidence="1">Catalyzes a salvage reaction resulting in the formation of AMP, that is energically less costly than de novo synthesis.</text>
</comment>
<comment type="catalytic activity">
    <reaction evidence="1">
        <text>AMP + diphosphate = 5-phospho-alpha-D-ribose 1-diphosphate + adenine</text>
        <dbReference type="Rhea" id="RHEA:16609"/>
        <dbReference type="ChEBI" id="CHEBI:16708"/>
        <dbReference type="ChEBI" id="CHEBI:33019"/>
        <dbReference type="ChEBI" id="CHEBI:58017"/>
        <dbReference type="ChEBI" id="CHEBI:456215"/>
        <dbReference type="EC" id="2.4.2.7"/>
    </reaction>
</comment>
<comment type="pathway">
    <text evidence="1">Purine metabolism; AMP biosynthesis via salvage pathway; AMP from adenine: step 1/1.</text>
</comment>
<comment type="subunit">
    <text evidence="1">Homodimer.</text>
</comment>
<comment type="subcellular location">
    <subcellularLocation>
        <location evidence="1">Cytoplasm</location>
    </subcellularLocation>
</comment>
<comment type="similarity">
    <text evidence="1">Belongs to the purine/pyrimidine phosphoribosyltransferase family.</text>
</comment>
<organism>
    <name type="scientific">Staphylococcus aureus (strain N315)</name>
    <dbReference type="NCBI Taxonomy" id="158879"/>
    <lineage>
        <taxon>Bacteria</taxon>
        <taxon>Bacillati</taxon>
        <taxon>Bacillota</taxon>
        <taxon>Bacilli</taxon>
        <taxon>Bacillales</taxon>
        <taxon>Staphylococcaceae</taxon>
        <taxon>Staphylococcus</taxon>
    </lineage>
</organism>